<keyword id="KW-0997">Cell inner membrane</keyword>
<keyword id="KW-1003">Cell membrane</keyword>
<keyword id="KW-0201">Cytochrome c-type biogenesis</keyword>
<keyword id="KW-0349">Heme</keyword>
<keyword id="KW-0408">Iron</keyword>
<keyword id="KW-0472">Membrane</keyword>
<keyword id="KW-0479">Metal-binding</keyword>
<keyword id="KW-0735">Signal-anchor</keyword>
<keyword id="KW-0812">Transmembrane</keyword>
<keyword id="KW-1133">Transmembrane helix</keyword>
<accession>Q1C651</accession>
<protein>
    <recommendedName>
        <fullName evidence="1">Cytochrome c-type biogenesis protein CcmE</fullName>
    </recommendedName>
    <alternativeName>
        <fullName evidence="1">Cytochrome c maturation protein E</fullName>
    </alternativeName>
    <alternativeName>
        <fullName evidence="1">Heme chaperone CcmE</fullName>
    </alternativeName>
</protein>
<evidence type="ECO:0000255" key="1">
    <source>
        <dbReference type="HAMAP-Rule" id="MF_01959"/>
    </source>
</evidence>
<evidence type="ECO:0000256" key="2">
    <source>
        <dbReference type="SAM" id="MobiDB-lite"/>
    </source>
</evidence>
<comment type="function">
    <text evidence="1">Heme chaperone required for the biogenesis of c-type cytochromes. Transiently binds heme delivered by CcmC and transfers the heme to apo-cytochromes in a process facilitated by CcmF and CcmH.</text>
</comment>
<comment type="subcellular location">
    <subcellularLocation>
        <location evidence="1">Cell inner membrane</location>
        <topology evidence="1">Single-pass type II membrane protein</topology>
        <orientation evidence="1">Periplasmic side</orientation>
    </subcellularLocation>
</comment>
<comment type="similarity">
    <text evidence="1">Belongs to the CcmE/CycJ family.</text>
</comment>
<proteinExistence type="inferred from homology"/>
<feature type="chain" id="PRO_1000070870" description="Cytochrome c-type biogenesis protein CcmE">
    <location>
        <begin position="1"/>
        <end position="164"/>
    </location>
</feature>
<feature type="topological domain" description="Cytoplasmic" evidence="1">
    <location>
        <begin position="1"/>
        <end position="8"/>
    </location>
</feature>
<feature type="transmembrane region" description="Helical; Signal-anchor for type II membrane protein" evidence="1">
    <location>
        <begin position="9"/>
        <end position="29"/>
    </location>
</feature>
<feature type="topological domain" description="Periplasmic" evidence="1">
    <location>
        <begin position="30"/>
        <end position="164"/>
    </location>
</feature>
<feature type="region of interest" description="Disordered" evidence="2">
    <location>
        <begin position="140"/>
        <end position="164"/>
    </location>
</feature>
<feature type="binding site" description="covalent" evidence="1">
    <location>
        <position position="130"/>
    </location>
    <ligand>
        <name>heme</name>
        <dbReference type="ChEBI" id="CHEBI:30413"/>
    </ligand>
</feature>
<feature type="binding site" description="axial binding residue" evidence="1">
    <location>
        <position position="134"/>
    </location>
    <ligand>
        <name>heme</name>
        <dbReference type="ChEBI" id="CHEBI:30413"/>
    </ligand>
    <ligandPart>
        <name>Fe</name>
        <dbReference type="ChEBI" id="CHEBI:18248"/>
    </ligandPart>
</feature>
<organism>
    <name type="scientific">Yersinia pestis bv. Antiqua (strain Antiqua)</name>
    <dbReference type="NCBI Taxonomy" id="360102"/>
    <lineage>
        <taxon>Bacteria</taxon>
        <taxon>Pseudomonadati</taxon>
        <taxon>Pseudomonadota</taxon>
        <taxon>Gammaproteobacteria</taxon>
        <taxon>Enterobacterales</taxon>
        <taxon>Yersiniaceae</taxon>
        <taxon>Yersinia</taxon>
    </lineage>
</organism>
<dbReference type="EMBL" id="CP000308">
    <property type="protein sequence ID" value="ABG14071.1"/>
    <property type="molecule type" value="Genomic_DNA"/>
</dbReference>
<dbReference type="RefSeq" id="WP_002209697.1">
    <property type="nucleotide sequence ID" value="NZ_CP009906.1"/>
</dbReference>
<dbReference type="SMR" id="Q1C651"/>
<dbReference type="GeneID" id="57975951"/>
<dbReference type="KEGG" id="ypa:YPA_2106"/>
<dbReference type="Proteomes" id="UP000001971">
    <property type="component" value="Chromosome"/>
</dbReference>
<dbReference type="GO" id="GO:0005886">
    <property type="term" value="C:plasma membrane"/>
    <property type="evidence" value="ECO:0007669"/>
    <property type="project" value="UniProtKB-SubCell"/>
</dbReference>
<dbReference type="GO" id="GO:0020037">
    <property type="term" value="F:heme binding"/>
    <property type="evidence" value="ECO:0007669"/>
    <property type="project" value="InterPro"/>
</dbReference>
<dbReference type="GO" id="GO:0046872">
    <property type="term" value="F:metal ion binding"/>
    <property type="evidence" value="ECO:0007669"/>
    <property type="project" value="UniProtKB-KW"/>
</dbReference>
<dbReference type="GO" id="GO:0017004">
    <property type="term" value="P:cytochrome complex assembly"/>
    <property type="evidence" value="ECO:0007669"/>
    <property type="project" value="UniProtKB-KW"/>
</dbReference>
<dbReference type="FunFam" id="2.40.50.140:FF:000104">
    <property type="entry name" value="Cytochrome c-type biogenesis protein CcmE"/>
    <property type="match status" value="1"/>
</dbReference>
<dbReference type="Gene3D" id="2.40.50.140">
    <property type="entry name" value="Nucleic acid-binding proteins"/>
    <property type="match status" value="1"/>
</dbReference>
<dbReference type="HAMAP" id="MF_01959">
    <property type="entry name" value="CcmE"/>
    <property type="match status" value="1"/>
</dbReference>
<dbReference type="InterPro" id="IPR004329">
    <property type="entry name" value="CcmE"/>
</dbReference>
<dbReference type="InterPro" id="IPR036127">
    <property type="entry name" value="CcmE-like_sf"/>
</dbReference>
<dbReference type="InterPro" id="IPR012340">
    <property type="entry name" value="NA-bd_OB-fold"/>
</dbReference>
<dbReference type="NCBIfam" id="NF009635">
    <property type="entry name" value="PRK13150.1"/>
    <property type="match status" value="1"/>
</dbReference>
<dbReference type="NCBIfam" id="NF009638">
    <property type="entry name" value="PRK13165.1"/>
    <property type="match status" value="1"/>
</dbReference>
<dbReference type="NCBIfam" id="NF009727">
    <property type="entry name" value="PRK13254.1-1"/>
    <property type="match status" value="1"/>
</dbReference>
<dbReference type="NCBIfam" id="NF009729">
    <property type="entry name" value="PRK13254.1-3"/>
    <property type="match status" value="1"/>
</dbReference>
<dbReference type="NCBIfam" id="NF009731">
    <property type="entry name" value="PRK13254.1-5"/>
    <property type="match status" value="1"/>
</dbReference>
<dbReference type="PANTHER" id="PTHR34128">
    <property type="entry name" value="CYTOCHROME C-TYPE BIOGENESIS PROTEIN CCME HOMOLOG, MITOCHONDRIAL"/>
    <property type="match status" value="1"/>
</dbReference>
<dbReference type="PANTHER" id="PTHR34128:SF2">
    <property type="entry name" value="CYTOCHROME C-TYPE BIOGENESIS PROTEIN CCME HOMOLOG, MITOCHONDRIAL"/>
    <property type="match status" value="1"/>
</dbReference>
<dbReference type="Pfam" id="PF03100">
    <property type="entry name" value="CcmE"/>
    <property type="match status" value="1"/>
</dbReference>
<dbReference type="SUPFAM" id="SSF82093">
    <property type="entry name" value="Heme chaperone CcmE"/>
    <property type="match status" value="1"/>
</dbReference>
<sequence>MNPRRKSRLYLAMVVLIGISLTTTLVLYALRSNIDLFYTPGEILQGKGERHEKPAIGQRLRIGGMVMPGSVQRDAKTLEMSFQVYDARGAVTVTYTGILPDLFREGQGVVAQGVFAEGNTVHAKEVLAKHDEKYTPPEVEEAMKENHSRPAAAYRGTNTTGNAL</sequence>
<reference key="1">
    <citation type="journal article" date="2006" name="J. Bacteriol.">
        <title>Complete genome sequence of Yersinia pestis strains Antiqua and Nepal516: evidence of gene reduction in an emerging pathogen.</title>
        <authorList>
            <person name="Chain P.S.G."/>
            <person name="Hu P."/>
            <person name="Malfatti S.A."/>
            <person name="Radnedge L."/>
            <person name="Larimer F."/>
            <person name="Vergez L.M."/>
            <person name="Worsham P."/>
            <person name="Chu M.C."/>
            <person name="Andersen G.L."/>
        </authorList>
    </citation>
    <scope>NUCLEOTIDE SEQUENCE [LARGE SCALE GENOMIC DNA]</scope>
    <source>
        <strain>Antiqua</strain>
    </source>
</reference>
<name>CCME_YERPA</name>
<gene>
    <name evidence="1" type="primary">ccmE</name>
    <name evidence="1" type="synonym">cycJ</name>
    <name type="ordered locus">YPA_2106</name>
</gene>